<feature type="chain" id="PRO_0000317658" description="Actin filament-associated protein 1">
    <location>
        <begin position="1"/>
        <end position="730"/>
    </location>
</feature>
<feature type="domain" description="PH 1" evidence="4">
    <location>
        <begin position="153"/>
        <end position="249"/>
    </location>
</feature>
<feature type="domain" description="PH 2" evidence="4">
    <location>
        <begin position="347"/>
        <end position="441"/>
    </location>
</feature>
<feature type="region of interest" description="Disordered" evidence="5">
    <location>
        <begin position="47"/>
        <end position="91"/>
    </location>
</feature>
<feature type="region of interest" description="Disordered" evidence="5">
    <location>
        <begin position="119"/>
        <end position="140"/>
    </location>
</feature>
<feature type="region of interest" description="Disordered" evidence="5">
    <location>
        <begin position="252"/>
        <end position="292"/>
    </location>
</feature>
<feature type="region of interest" description="Disordered" evidence="5">
    <location>
        <begin position="512"/>
        <end position="537"/>
    </location>
</feature>
<feature type="region of interest" description="Interaction with F-actin" evidence="1">
    <location>
        <begin position="594"/>
        <end position="637"/>
    </location>
</feature>
<feature type="coiled-coil region" evidence="3">
    <location>
        <begin position="557"/>
        <end position="648"/>
    </location>
</feature>
<feature type="short sequence motif" description="SH3-binding" evidence="1">
    <location>
        <begin position="71"/>
        <end position="74"/>
    </location>
</feature>
<feature type="short sequence motif" description="SH2-binding 1" evidence="1">
    <location>
        <begin position="94"/>
        <end position="97"/>
    </location>
</feature>
<feature type="short sequence motif" description="SH2-binding 2" evidence="1">
    <location>
        <begin position="451"/>
        <end position="456"/>
    </location>
</feature>
<feature type="compositionally biased region" description="Pro residues" evidence="5">
    <location>
        <begin position="60"/>
        <end position="85"/>
    </location>
</feature>
<feature type="compositionally biased region" description="Basic and acidic residues" evidence="5">
    <location>
        <begin position="268"/>
        <end position="283"/>
    </location>
</feature>
<feature type="modified residue" description="N-acetylmethionine" evidence="17">
    <location>
        <position position="1"/>
    </location>
</feature>
<feature type="modified residue" description="Phosphoserine" evidence="14">
    <location>
        <position position="282"/>
    </location>
</feature>
<feature type="modified residue" description="Phosphoserine" evidence="14">
    <location>
        <position position="283"/>
    </location>
</feature>
<feature type="modified residue" description="Phosphoserine" evidence="15">
    <location>
        <position position="548"/>
    </location>
</feature>
<feature type="modified residue" description="Phosphoserine" evidence="14">
    <location>
        <position position="664"/>
    </location>
</feature>
<feature type="modified residue" description="Phosphoserine" evidence="14">
    <location>
        <position position="665"/>
    </location>
</feature>
<feature type="modified residue" description="Phosphoserine" evidence="14 15 16 18 19">
    <location>
        <position position="668"/>
    </location>
</feature>
<feature type="modified residue" description="Phosphothreonine" evidence="2">
    <location>
        <position position="675"/>
    </location>
</feature>
<feature type="modified residue" description="Phosphoserine" evidence="14">
    <location>
        <position position="679"/>
    </location>
</feature>
<feature type="modified residue" description="Phosphoserine" evidence="14">
    <location>
        <position position="687"/>
    </location>
</feature>
<feature type="splice variant" id="VSP_044838" description="In isoform 2." evidence="12">
    <original>S</original>
    <variation>SWEPEDGFPASCSRGLGEEVLYDNAGLYDNLPPPHIFARYSPADRKASRLSADKLSSNHYKYPASAQSVTNTSSVGRASLGLNSQ</variation>
    <location>
        <position position="510"/>
    </location>
</feature>
<feature type="sequence variant" id="VAR_038578" description="In dbSNP:rs28406288." evidence="6 8">
    <original>S</original>
    <variation>C</variation>
    <location>
        <position position="403"/>
    </location>
</feature>
<feature type="sequence variant" id="VAR_038579" description="In dbSNP:rs41264705." evidence="11">
    <original>V</original>
    <variation>M</variation>
    <location>
        <position position="518"/>
    </location>
</feature>
<feature type="mutagenesis site" description="Decreased tyrosine phosphorylation." evidence="7">
    <original>P</original>
    <variation>A</variation>
    <location>
        <position position="71"/>
    </location>
</feature>
<feature type="mutagenesis site" description="No effect on tyrosine phosphorylation." evidence="7">
    <original>P</original>
    <variation>A</variation>
    <location>
        <position position="77"/>
    </location>
</feature>
<feature type="mutagenesis site" description="Reduces phosphorylation and phosphorylation of SRC at Y-416; when associated with F-94; F-125; F-451 and F-453." evidence="7">
    <original>Y</original>
    <variation>F</variation>
    <location>
        <position position="93"/>
    </location>
</feature>
<feature type="mutagenesis site" description="Reduces phosphorylation and phosphorylation of SRC at Y-416; when associated with F-93; F-125; F-451 and F-453." evidence="7">
    <original>Y</original>
    <variation>F</variation>
    <location>
        <position position="94"/>
    </location>
</feature>
<feature type="mutagenesis site" description="Reduces phosphorylation and phosphorylation of SRC at Y-416; when associated with F-93; F-94; F-451 and F-453." evidence="7">
    <original>Y</original>
    <variation>F</variation>
    <location>
        <position position="125"/>
    </location>
</feature>
<feature type="mutagenesis site" description="Reduces phosphorylation and phosphorylation of SRC at Y-416; when associated with F-93; F-94; F-125 and F-453." evidence="7">
    <original>Y</original>
    <variation>F</variation>
    <location>
        <position position="451"/>
    </location>
</feature>
<feature type="mutagenesis site" description="Reduces phosphorylation and phosphorylation of SRC at Y-416; when associated with F-93; F-94; F-125 and F-451." evidence="7">
    <original>Y</original>
    <variation>F</variation>
    <location>
        <position position="453"/>
    </location>
</feature>
<feature type="sequence conflict" description="In Ref. 1; AAG17055." evidence="13" ref="1">
    <original>P</original>
    <variation>L</variation>
    <location>
        <position position="197"/>
    </location>
</feature>
<feature type="sequence conflict" description="In Ref. 1; AAG17055." evidence="13" ref="1">
    <original>G</original>
    <variation>D</variation>
    <location>
        <position position="223"/>
    </location>
</feature>
<feature type="sequence conflict" description="In Ref. 1; AAG17055." evidence="13" ref="1">
    <original>E</original>
    <variation>G</variation>
    <location>
        <position position="238"/>
    </location>
</feature>
<feature type="sequence conflict" description="In Ref. 2; BAF83496." evidence="13" ref="2">
    <original>T</original>
    <variation>A</variation>
    <location>
        <position position="465"/>
    </location>
</feature>
<feature type="sequence conflict" description="In Ref. 2; BAG60004." evidence="13" ref="2">
    <original>A</original>
    <variation>V</variation>
    <location sequence="Q8N556-2">
        <position position="561"/>
    </location>
</feature>
<evidence type="ECO:0000250" key="1"/>
<evidence type="ECO:0000250" key="2">
    <source>
        <dbReference type="UniProtKB" id="Q80YS6"/>
    </source>
</evidence>
<evidence type="ECO:0000255" key="3"/>
<evidence type="ECO:0000255" key="4">
    <source>
        <dbReference type="PROSITE-ProRule" id="PRU00145"/>
    </source>
</evidence>
<evidence type="ECO:0000256" key="5">
    <source>
        <dbReference type="SAM" id="MobiDB-lite"/>
    </source>
</evidence>
<evidence type="ECO:0000269" key="6">
    <source>
    </source>
</evidence>
<evidence type="ECO:0000269" key="7">
    <source>
    </source>
</evidence>
<evidence type="ECO:0000269" key="8">
    <source>
    </source>
</evidence>
<evidence type="ECO:0000269" key="9">
    <source>
    </source>
</evidence>
<evidence type="ECO:0000269" key="10">
    <source>
    </source>
</evidence>
<evidence type="ECO:0000269" key="11">
    <source ref="5"/>
</evidence>
<evidence type="ECO:0000303" key="12">
    <source>
    </source>
</evidence>
<evidence type="ECO:0000305" key="13"/>
<evidence type="ECO:0007744" key="14">
    <source>
    </source>
</evidence>
<evidence type="ECO:0007744" key="15">
    <source>
    </source>
</evidence>
<evidence type="ECO:0007744" key="16">
    <source>
    </source>
</evidence>
<evidence type="ECO:0007744" key="17">
    <source>
    </source>
</evidence>
<evidence type="ECO:0007744" key="18">
    <source>
    </source>
</evidence>
<evidence type="ECO:0007744" key="19">
    <source>
    </source>
</evidence>
<reference key="1">
    <citation type="journal article" date="2004" name="J. Biol. Chem.">
        <title>Conversion of mechanical force into biochemical signaling.</title>
        <authorList>
            <person name="Han B."/>
            <person name="Bai X.H."/>
            <person name="Lodyga M."/>
            <person name="Xu J."/>
            <person name="Yang B.B."/>
            <person name="Keshavjee S."/>
            <person name="Post M."/>
            <person name="Liu M."/>
        </authorList>
    </citation>
    <scope>NUCLEOTIDE SEQUENCE [MRNA] (ISOFORM 1)</scope>
    <scope>FUNCTION</scope>
    <scope>SUBCELLULAR LOCATION</scope>
    <scope>INTERACTION WITH SRC</scope>
    <scope>PHOSPHORYLATION BY SRC</scope>
    <scope>MUTAGENESIS OF PRO-71; PRO-77; TYR-93; TYR-94; TYR-125; TYR-451 AND TYR-453</scope>
    <source>
        <tissue>Lung</tissue>
    </source>
</reference>
<reference key="2">
    <citation type="journal article" date="2004" name="Nat. Genet.">
        <title>Complete sequencing and characterization of 21,243 full-length human cDNAs.</title>
        <authorList>
            <person name="Ota T."/>
            <person name="Suzuki Y."/>
            <person name="Nishikawa T."/>
            <person name="Otsuki T."/>
            <person name="Sugiyama T."/>
            <person name="Irie R."/>
            <person name="Wakamatsu A."/>
            <person name="Hayashi K."/>
            <person name="Sato H."/>
            <person name="Nagai K."/>
            <person name="Kimura K."/>
            <person name="Makita H."/>
            <person name="Sekine M."/>
            <person name="Obayashi M."/>
            <person name="Nishi T."/>
            <person name="Shibahara T."/>
            <person name="Tanaka T."/>
            <person name="Ishii S."/>
            <person name="Yamamoto J."/>
            <person name="Saito K."/>
            <person name="Kawai Y."/>
            <person name="Isono Y."/>
            <person name="Nakamura Y."/>
            <person name="Nagahari K."/>
            <person name="Murakami K."/>
            <person name="Yasuda T."/>
            <person name="Iwayanagi T."/>
            <person name="Wagatsuma M."/>
            <person name="Shiratori A."/>
            <person name="Sudo H."/>
            <person name="Hosoiri T."/>
            <person name="Kaku Y."/>
            <person name="Kodaira H."/>
            <person name="Kondo H."/>
            <person name="Sugawara M."/>
            <person name="Takahashi M."/>
            <person name="Kanda K."/>
            <person name="Yokoi T."/>
            <person name="Furuya T."/>
            <person name="Kikkawa E."/>
            <person name="Omura Y."/>
            <person name="Abe K."/>
            <person name="Kamihara K."/>
            <person name="Katsuta N."/>
            <person name="Sato K."/>
            <person name="Tanikawa M."/>
            <person name="Yamazaki M."/>
            <person name="Ninomiya K."/>
            <person name="Ishibashi T."/>
            <person name="Yamashita H."/>
            <person name="Murakawa K."/>
            <person name="Fujimori K."/>
            <person name="Tanai H."/>
            <person name="Kimata M."/>
            <person name="Watanabe M."/>
            <person name="Hiraoka S."/>
            <person name="Chiba Y."/>
            <person name="Ishida S."/>
            <person name="Ono Y."/>
            <person name="Takiguchi S."/>
            <person name="Watanabe S."/>
            <person name="Yosida M."/>
            <person name="Hotuta T."/>
            <person name="Kusano J."/>
            <person name="Kanehori K."/>
            <person name="Takahashi-Fujii A."/>
            <person name="Hara H."/>
            <person name="Tanase T.-O."/>
            <person name="Nomura Y."/>
            <person name="Togiya S."/>
            <person name="Komai F."/>
            <person name="Hara R."/>
            <person name="Takeuchi K."/>
            <person name="Arita M."/>
            <person name="Imose N."/>
            <person name="Musashino K."/>
            <person name="Yuuki H."/>
            <person name="Oshima A."/>
            <person name="Sasaki N."/>
            <person name="Aotsuka S."/>
            <person name="Yoshikawa Y."/>
            <person name="Matsunawa H."/>
            <person name="Ichihara T."/>
            <person name="Shiohata N."/>
            <person name="Sano S."/>
            <person name="Moriya S."/>
            <person name="Momiyama H."/>
            <person name="Satoh N."/>
            <person name="Takami S."/>
            <person name="Terashima Y."/>
            <person name="Suzuki O."/>
            <person name="Nakagawa S."/>
            <person name="Senoh A."/>
            <person name="Mizoguchi H."/>
            <person name="Goto Y."/>
            <person name="Shimizu F."/>
            <person name="Wakebe H."/>
            <person name="Hishigaki H."/>
            <person name="Watanabe T."/>
            <person name="Sugiyama A."/>
            <person name="Takemoto M."/>
            <person name="Kawakami B."/>
            <person name="Yamazaki M."/>
            <person name="Watanabe K."/>
            <person name="Kumagai A."/>
            <person name="Itakura S."/>
            <person name="Fukuzumi Y."/>
            <person name="Fujimori Y."/>
            <person name="Komiyama M."/>
            <person name="Tashiro H."/>
            <person name="Tanigami A."/>
            <person name="Fujiwara T."/>
            <person name="Ono T."/>
            <person name="Yamada K."/>
            <person name="Fujii Y."/>
            <person name="Ozaki K."/>
            <person name="Hirao M."/>
            <person name="Ohmori Y."/>
            <person name="Kawabata A."/>
            <person name="Hikiji T."/>
            <person name="Kobatake N."/>
            <person name="Inagaki H."/>
            <person name="Ikema Y."/>
            <person name="Okamoto S."/>
            <person name="Okitani R."/>
            <person name="Kawakami T."/>
            <person name="Noguchi S."/>
            <person name="Itoh T."/>
            <person name="Shigeta K."/>
            <person name="Senba T."/>
            <person name="Matsumura K."/>
            <person name="Nakajima Y."/>
            <person name="Mizuno T."/>
            <person name="Morinaga M."/>
            <person name="Sasaki M."/>
            <person name="Togashi T."/>
            <person name="Oyama M."/>
            <person name="Hata H."/>
            <person name="Watanabe M."/>
            <person name="Komatsu T."/>
            <person name="Mizushima-Sugano J."/>
            <person name="Satoh T."/>
            <person name="Shirai Y."/>
            <person name="Takahashi Y."/>
            <person name="Nakagawa K."/>
            <person name="Okumura K."/>
            <person name="Nagase T."/>
            <person name="Nomura N."/>
            <person name="Kikuchi H."/>
            <person name="Masuho Y."/>
            <person name="Yamashita R."/>
            <person name="Nakai K."/>
            <person name="Yada T."/>
            <person name="Nakamura Y."/>
            <person name="Ohara O."/>
            <person name="Isogai T."/>
            <person name="Sugano S."/>
        </authorList>
    </citation>
    <scope>NUCLEOTIDE SEQUENCE [LARGE SCALE MRNA] (ISOFORMS 1 AND 2)</scope>
    <scope>VARIANT CYS-403</scope>
    <source>
        <tissue>Brain</tissue>
        <tissue>Kidney</tissue>
    </source>
</reference>
<reference key="3">
    <citation type="journal article" date="2005" name="Nature">
        <title>Generation and annotation of the DNA sequences of human chromosomes 2 and 4.</title>
        <authorList>
            <person name="Hillier L.W."/>
            <person name="Graves T.A."/>
            <person name="Fulton R.S."/>
            <person name="Fulton L.A."/>
            <person name="Pepin K.H."/>
            <person name="Minx P."/>
            <person name="Wagner-McPherson C."/>
            <person name="Layman D."/>
            <person name="Wylie K."/>
            <person name="Sekhon M."/>
            <person name="Becker M.C."/>
            <person name="Fewell G.A."/>
            <person name="Delehaunty K.D."/>
            <person name="Miner T.L."/>
            <person name="Nash W.E."/>
            <person name="Kremitzki C."/>
            <person name="Oddy L."/>
            <person name="Du H."/>
            <person name="Sun H."/>
            <person name="Bradshaw-Cordum H."/>
            <person name="Ali J."/>
            <person name="Carter J."/>
            <person name="Cordes M."/>
            <person name="Harris A."/>
            <person name="Isak A."/>
            <person name="van Brunt A."/>
            <person name="Nguyen C."/>
            <person name="Du F."/>
            <person name="Courtney L."/>
            <person name="Kalicki J."/>
            <person name="Ozersky P."/>
            <person name="Abbott S."/>
            <person name="Armstrong J."/>
            <person name="Belter E.A."/>
            <person name="Caruso L."/>
            <person name="Cedroni M."/>
            <person name="Cotton M."/>
            <person name="Davidson T."/>
            <person name="Desai A."/>
            <person name="Elliott G."/>
            <person name="Erb T."/>
            <person name="Fronick C."/>
            <person name="Gaige T."/>
            <person name="Haakenson W."/>
            <person name="Haglund K."/>
            <person name="Holmes A."/>
            <person name="Harkins R."/>
            <person name="Kim K."/>
            <person name="Kruchowski S.S."/>
            <person name="Strong C.M."/>
            <person name="Grewal N."/>
            <person name="Goyea E."/>
            <person name="Hou S."/>
            <person name="Levy A."/>
            <person name="Martinka S."/>
            <person name="Mead K."/>
            <person name="McLellan M.D."/>
            <person name="Meyer R."/>
            <person name="Randall-Maher J."/>
            <person name="Tomlinson C."/>
            <person name="Dauphin-Kohlberg S."/>
            <person name="Kozlowicz-Reilly A."/>
            <person name="Shah N."/>
            <person name="Swearengen-Shahid S."/>
            <person name="Snider J."/>
            <person name="Strong J.T."/>
            <person name="Thompson J."/>
            <person name="Yoakum M."/>
            <person name="Leonard S."/>
            <person name="Pearman C."/>
            <person name="Trani L."/>
            <person name="Radionenko M."/>
            <person name="Waligorski J.E."/>
            <person name="Wang C."/>
            <person name="Rock S.M."/>
            <person name="Tin-Wollam A.-M."/>
            <person name="Maupin R."/>
            <person name="Latreille P."/>
            <person name="Wendl M.C."/>
            <person name="Yang S.-P."/>
            <person name="Pohl C."/>
            <person name="Wallis J.W."/>
            <person name="Spieth J."/>
            <person name="Bieri T.A."/>
            <person name="Berkowicz N."/>
            <person name="Nelson J.O."/>
            <person name="Osborne J."/>
            <person name="Ding L."/>
            <person name="Meyer R."/>
            <person name="Sabo A."/>
            <person name="Shotland Y."/>
            <person name="Sinha P."/>
            <person name="Wohldmann P.E."/>
            <person name="Cook L.L."/>
            <person name="Hickenbotham M.T."/>
            <person name="Eldred J."/>
            <person name="Williams D."/>
            <person name="Jones T.A."/>
            <person name="She X."/>
            <person name="Ciccarelli F.D."/>
            <person name="Izaurralde E."/>
            <person name="Taylor J."/>
            <person name="Schmutz J."/>
            <person name="Myers R.M."/>
            <person name="Cox D.R."/>
            <person name="Huang X."/>
            <person name="McPherson J.D."/>
            <person name="Mardis E.R."/>
            <person name="Clifton S.W."/>
            <person name="Warren W.C."/>
            <person name="Chinwalla A.T."/>
            <person name="Eddy S.R."/>
            <person name="Marra M.A."/>
            <person name="Ovcharenko I."/>
            <person name="Furey T.S."/>
            <person name="Miller W."/>
            <person name="Eichler E.E."/>
            <person name="Bork P."/>
            <person name="Suyama M."/>
            <person name="Torrents D."/>
            <person name="Waterston R.H."/>
            <person name="Wilson R.K."/>
        </authorList>
    </citation>
    <scope>NUCLEOTIDE SEQUENCE [LARGE SCALE GENOMIC DNA]</scope>
</reference>
<reference key="4">
    <citation type="journal article" date="2004" name="Genome Res.">
        <title>The status, quality, and expansion of the NIH full-length cDNA project: the Mammalian Gene Collection (MGC).</title>
        <authorList>
            <consortium name="The MGC Project Team"/>
        </authorList>
    </citation>
    <scope>NUCLEOTIDE SEQUENCE [LARGE SCALE MRNA] (ISOFORM 1)</scope>
    <scope>VARIANT CYS-403</scope>
    <source>
        <tissue>Brain</tissue>
    </source>
</reference>
<reference key="5">
    <citation type="submission" date="2005-03" db="EMBL/GenBank/DDBJ databases">
        <authorList>
            <person name="Totoki Y."/>
            <person name="Toyoda A."/>
            <person name="Takeda T."/>
            <person name="Sakaki Y."/>
            <person name="Tanaka A."/>
            <person name="Yokoyama S."/>
            <person name="Ohara O."/>
            <person name="Nagase T."/>
            <person name="Kikuno R.F."/>
        </authorList>
    </citation>
    <scope>NUCLEOTIDE SEQUENCE [LARGE SCALE MRNA] OF 93-730 (ISOFORM 1)</scope>
    <scope>VARIANT MET-518</scope>
    <source>
        <tissue>Brain</tissue>
    </source>
</reference>
<reference key="6">
    <citation type="journal article" date="2006" name="Cell">
        <title>Global, in vivo, and site-specific phosphorylation dynamics in signaling networks.</title>
        <authorList>
            <person name="Olsen J.V."/>
            <person name="Blagoev B."/>
            <person name="Gnad F."/>
            <person name="Macek B."/>
            <person name="Kumar C."/>
            <person name="Mortensen P."/>
            <person name="Mann M."/>
        </authorList>
    </citation>
    <scope>IDENTIFICATION BY MASS SPECTROMETRY [LARGE SCALE ANALYSIS]</scope>
    <source>
        <tissue>Cervix carcinoma</tissue>
    </source>
</reference>
<reference key="7">
    <citation type="journal article" date="2007" name="J. Cell. Physiol.">
        <title>AFAP-110 is required for actin stress fiber formation and cell adhesion in MDA-MB-231 breast cancer cells.</title>
        <authorList>
            <person name="Dorfleutner A."/>
            <person name="Stehlik C."/>
            <person name="Zhang J."/>
            <person name="Gallick G.E."/>
            <person name="Flynn D.C."/>
        </authorList>
    </citation>
    <scope>TISSUE SPECIFICITY</scope>
    <scope>KNOCKDOWN IN MDA-MB-231 CELLS</scope>
</reference>
<reference key="8">
    <citation type="journal article" date="2007" name="J. Clin. Invest.">
        <title>AFAP-110 is overexpressed in prostate cancer and contributes to tumorigenic growth by regulating focal contacts.</title>
        <authorList>
            <person name="Zhang J."/>
            <person name="Park S.I."/>
            <person name="Artime M.C."/>
            <person name="Summy J.M."/>
            <person name="Shah A.N."/>
            <person name="Bomser J.A."/>
            <person name="Dorfleutner A."/>
            <person name="Flynn D.C."/>
            <person name="Gallick G.E."/>
        </authorList>
    </citation>
    <scope>TISSUE SPECIFICITY</scope>
    <scope>POSSIBLE FUNCTION IN PROSTATE CANCER PROGRESSION</scope>
</reference>
<reference key="9">
    <citation type="journal article" date="2008" name="Proc. Natl. Acad. Sci. U.S.A.">
        <title>A quantitative atlas of mitotic phosphorylation.</title>
        <authorList>
            <person name="Dephoure N."/>
            <person name="Zhou C."/>
            <person name="Villen J."/>
            <person name="Beausoleil S.A."/>
            <person name="Bakalarski C.E."/>
            <person name="Elledge S.J."/>
            <person name="Gygi S.P."/>
        </authorList>
    </citation>
    <scope>PHOSPHORYLATION [LARGE SCALE ANALYSIS] AT SER-282; SER-283; SER-664; SER-665; SER-668; SER-679 AND SER-687</scope>
    <scope>IDENTIFICATION BY MASS SPECTROMETRY [LARGE SCALE ANALYSIS]</scope>
    <source>
        <tissue>Cervix carcinoma</tissue>
    </source>
</reference>
<reference key="10">
    <citation type="journal article" date="2010" name="Sci. Signal.">
        <title>Quantitative phosphoproteomics reveals widespread full phosphorylation site occupancy during mitosis.</title>
        <authorList>
            <person name="Olsen J.V."/>
            <person name="Vermeulen M."/>
            <person name="Santamaria A."/>
            <person name="Kumar C."/>
            <person name="Miller M.L."/>
            <person name="Jensen L.J."/>
            <person name="Gnad F."/>
            <person name="Cox J."/>
            <person name="Jensen T.S."/>
            <person name="Nigg E.A."/>
            <person name="Brunak S."/>
            <person name="Mann M."/>
        </authorList>
    </citation>
    <scope>PHOSPHORYLATION [LARGE SCALE ANALYSIS] AT SER-548 AND SER-668</scope>
    <scope>IDENTIFICATION BY MASS SPECTROMETRY [LARGE SCALE ANALYSIS]</scope>
    <source>
        <tissue>Cervix carcinoma</tissue>
    </source>
</reference>
<reference key="11">
    <citation type="journal article" date="2011" name="Sci. Signal.">
        <title>System-wide temporal characterization of the proteome and phosphoproteome of human embryonic stem cell differentiation.</title>
        <authorList>
            <person name="Rigbolt K.T."/>
            <person name="Prokhorova T.A."/>
            <person name="Akimov V."/>
            <person name="Henningsen J."/>
            <person name="Johansen P.T."/>
            <person name="Kratchmarova I."/>
            <person name="Kassem M."/>
            <person name="Mann M."/>
            <person name="Olsen J.V."/>
            <person name="Blagoev B."/>
        </authorList>
    </citation>
    <scope>PHOSPHORYLATION [LARGE SCALE ANALYSIS] AT SER-668</scope>
    <scope>IDENTIFICATION BY MASS SPECTROMETRY [LARGE SCALE ANALYSIS]</scope>
</reference>
<reference key="12">
    <citation type="journal article" date="2012" name="Proc. Natl. Acad. Sci. U.S.A.">
        <title>N-terminal acetylome analyses and functional insights of the N-terminal acetyltransferase NatB.</title>
        <authorList>
            <person name="Van Damme P."/>
            <person name="Lasa M."/>
            <person name="Polevoda B."/>
            <person name="Gazquez C."/>
            <person name="Elosegui-Artola A."/>
            <person name="Kim D.S."/>
            <person name="De Juan-Pardo E."/>
            <person name="Demeyer K."/>
            <person name="Hole K."/>
            <person name="Larrea E."/>
            <person name="Timmerman E."/>
            <person name="Prieto J."/>
            <person name="Arnesen T."/>
            <person name="Sherman F."/>
            <person name="Gevaert K."/>
            <person name="Aldabe R."/>
        </authorList>
    </citation>
    <scope>ACETYLATION [LARGE SCALE ANALYSIS] AT MET-1</scope>
    <scope>IDENTIFICATION BY MASS SPECTROMETRY [LARGE SCALE ANALYSIS]</scope>
</reference>
<reference key="13">
    <citation type="journal article" date="2013" name="J. Proteome Res.">
        <title>Toward a comprehensive characterization of a human cancer cell phosphoproteome.</title>
        <authorList>
            <person name="Zhou H."/>
            <person name="Di Palma S."/>
            <person name="Preisinger C."/>
            <person name="Peng M."/>
            <person name="Polat A.N."/>
            <person name="Heck A.J."/>
            <person name="Mohammed S."/>
        </authorList>
    </citation>
    <scope>PHOSPHORYLATION [LARGE SCALE ANALYSIS] AT SER-668</scope>
    <scope>IDENTIFICATION BY MASS SPECTROMETRY [LARGE SCALE ANALYSIS]</scope>
    <source>
        <tissue>Cervix carcinoma</tissue>
    </source>
</reference>
<reference key="14">
    <citation type="journal article" date="2014" name="J. Proteomics">
        <title>An enzyme assisted RP-RPLC approach for in-depth analysis of human liver phosphoproteome.</title>
        <authorList>
            <person name="Bian Y."/>
            <person name="Song C."/>
            <person name="Cheng K."/>
            <person name="Dong M."/>
            <person name="Wang F."/>
            <person name="Huang J."/>
            <person name="Sun D."/>
            <person name="Wang L."/>
            <person name="Ye M."/>
            <person name="Zou H."/>
        </authorList>
    </citation>
    <scope>PHOSPHORYLATION [LARGE SCALE ANALYSIS] AT SER-668</scope>
    <scope>IDENTIFICATION BY MASS SPECTROMETRY [LARGE SCALE ANALYSIS]</scope>
    <source>
        <tissue>Liver</tissue>
    </source>
</reference>
<sequence>MEELIVELRLFLELLDHEYLTSTVREKKAVITNILLRIQSSKGFDVKDHAQKQETANSLPAPPQMPLPEIPQPWLPPDSGPPPLPTSSLPEGYYEEAVPLSPGKAPEYITSNYDSDAMSSSYESYDEEEEDGKGKKTRHQWPSEEASMDLVKDAKICAFLLRKKRFGQWTKLLCVIKDTKLLCYKSSKDQQPQMELPLQGCNITYIPKDSKKKKHELKITQQGTDPLVLAVQSKEQAEQWLKVIKEAYSGCSGPVDSECPPPPSSPVHKAELEKKLSSERPSSDGEGVVENGITTCNGKEQVKRKKSSKSEAKGTVSKVTGKKITKIISLGKKKPSTDEQTSSAEEDVPTCGYLNVLSNSRWRERWCRVKDNKLIFHKDRTDLKTHIVSIPLRGCEVIPGLDSKHPLTFRLLRNGQEVAVLEASSSEDMGRWIGILLAETGSSTDPEALHYDYIDVEMSASVIQTAKQTFCFMNRRVISANPYLGGTSNGYAHPSGTALHYDDVPCINGSLKGKKPPVASNGVTGKGKTLSSQPKKADPAAVVKRTGSNAAQYKYGKNRVEADAKRLQTKEEELLKRKEALRNRLAQLRKERKDLRAAIEVNAGRKPQAILEEKLKQLEEECRQKEAERVSLELELTEVKESLKKALAGGVTLGLAIEPKSGTSSPQSPVFRHRTLENSPISSCDTSDTEGPVPVNSAAVLKKSQAAPGSSPCRGHVLRKAKEWELKNGT</sequence>
<proteinExistence type="evidence at protein level"/>
<comment type="function">
    <text evidence="1 7">Can cross-link actin filaments into both network and bundle structures (By similarity). May modulate changes in actin filament integrity and induce lamellipodia formation. May function as an adapter molecule that links other proteins, such as SRC and PKC to the actin cytoskeleton. Seems to play a role in the development and progression of prostate adenocarcinoma by regulating cell-matrix adhesions and migration in the cancer cells.</text>
</comment>
<comment type="subunit">
    <text evidence="1">Monomer and homomultimer. Interacts via its C-terminus with F-actin; probably involving AFAP1 multimers (By similarity). Interacts with activated SRC SH3-SH2 domains. Interacts via its PH 1 domain with PRKCA, PRKCB and PRKCI (By similarity).</text>
</comment>
<comment type="subcellular location">
    <subcellularLocation>
        <location evidence="7">Cytoplasm</location>
        <location evidence="7">Cytoskeleton</location>
        <location evidence="7">Stress fiber</location>
    </subcellularLocation>
</comment>
<comment type="alternative products">
    <event type="alternative splicing"/>
    <isoform>
        <id>Q8N556-1</id>
        <name>1</name>
        <sequence type="displayed"/>
    </isoform>
    <isoform>
        <id>Q8N556-2</id>
        <name>2</name>
        <sequence type="described" ref="VSP_044838"/>
    </isoform>
</comment>
<comment type="tissue specificity">
    <text evidence="9 10">Low expression in normal breast epithelial cell line MCF-10A and in tumorigenic breast cancer cell lines MCF-7, T-47D and ZR-75-1. Highly expressed in the invasive breast cancer cell lines MDA-MB-231 and MDA-MB-435. Overexpressed in prostate carcinoma.</text>
</comment>
<comment type="PTM">
    <text evidence="7">Phosphorylated on tyrosine residues by SRC.</text>
</comment>
<comment type="miscellaneous">
    <text>Knockdown in MDA-MB-231 cells resulted in loss of actin stress fibers, decreased adhesion and spreading on fibronectin.</text>
</comment>
<name>AFAP1_HUMAN</name>
<protein>
    <recommendedName>
        <fullName>Actin filament-associated protein 1</fullName>
    </recommendedName>
    <alternativeName>
        <fullName>110 kDa actin filament-associated protein</fullName>
        <shortName>AFAP-110</shortName>
    </alternativeName>
</protein>
<dbReference type="EMBL" id="AF188700">
    <property type="protein sequence ID" value="AAG17055.1"/>
    <property type="molecule type" value="mRNA"/>
</dbReference>
<dbReference type="EMBL" id="AK290807">
    <property type="protein sequence ID" value="BAF83496.1"/>
    <property type="molecule type" value="mRNA"/>
</dbReference>
<dbReference type="EMBL" id="AK297631">
    <property type="protein sequence ID" value="BAG60004.1"/>
    <property type="molecule type" value="mRNA"/>
</dbReference>
<dbReference type="EMBL" id="AC004169">
    <property type="status" value="NOT_ANNOTATED_CDS"/>
    <property type="molecule type" value="Genomic_DNA"/>
</dbReference>
<dbReference type="EMBL" id="AC097381">
    <property type="status" value="NOT_ANNOTATED_CDS"/>
    <property type="molecule type" value="Genomic_DNA"/>
</dbReference>
<dbReference type="EMBL" id="AC112254">
    <property type="status" value="NOT_ANNOTATED_CDS"/>
    <property type="molecule type" value="Genomic_DNA"/>
</dbReference>
<dbReference type="EMBL" id="AC141931">
    <property type="status" value="NOT_ANNOTATED_CDS"/>
    <property type="molecule type" value="Genomic_DNA"/>
</dbReference>
<dbReference type="EMBL" id="AC144451">
    <property type="status" value="NOT_ANNOTATED_CDS"/>
    <property type="molecule type" value="Genomic_DNA"/>
</dbReference>
<dbReference type="EMBL" id="BC032777">
    <property type="protein sequence ID" value="AAH32777.1"/>
    <property type="molecule type" value="mRNA"/>
</dbReference>
<dbReference type="EMBL" id="AB209676">
    <property type="protein sequence ID" value="BAD92913.1"/>
    <property type="molecule type" value="mRNA"/>
</dbReference>
<dbReference type="CCDS" id="CCDS3397.1">
    <molecule id="Q8N556-1"/>
</dbReference>
<dbReference type="CCDS" id="CCDS47010.1">
    <molecule id="Q8N556-2"/>
</dbReference>
<dbReference type="RefSeq" id="NP_001128119.1">
    <molecule id="Q8N556-2"/>
    <property type="nucleotide sequence ID" value="NM_001134647.2"/>
</dbReference>
<dbReference type="RefSeq" id="NP_001358019.1">
    <molecule id="Q8N556-1"/>
    <property type="nucleotide sequence ID" value="NM_001371090.1"/>
</dbReference>
<dbReference type="RefSeq" id="NP_001358020.1">
    <molecule id="Q8N556-1"/>
    <property type="nucleotide sequence ID" value="NM_001371091.1"/>
</dbReference>
<dbReference type="RefSeq" id="NP_940997.1">
    <molecule id="Q8N556-1"/>
    <property type="nucleotide sequence ID" value="NM_198595.3"/>
</dbReference>
<dbReference type="RefSeq" id="XP_011511846.1">
    <molecule id="Q8N556-2"/>
    <property type="nucleotide sequence ID" value="XM_011513544.4"/>
</dbReference>
<dbReference type="RefSeq" id="XP_054206664.1">
    <molecule id="Q8N556-2"/>
    <property type="nucleotide sequence ID" value="XM_054350689.1"/>
</dbReference>
<dbReference type="SMR" id="Q8N556"/>
<dbReference type="BioGRID" id="121895">
    <property type="interactions" value="75"/>
</dbReference>
<dbReference type="FunCoup" id="Q8N556">
    <property type="interactions" value="678"/>
</dbReference>
<dbReference type="IntAct" id="Q8N556">
    <property type="interactions" value="46"/>
</dbReference>
<dbReference type="STRING" id="9606.ENSP00000410689"/>
<dbReference type="GlyGen" id="Q8N556">
    <property type="glycosylation" value="1 site, 1 O-linked glycan (1 site)"/>
</dbReference>
<dbReference type="iPTMnet" id="Q8N556"/>
<dbReference type="PhosphoSitePlus" id="Q8N556"/>
<dbReference type="BioMuta" id="AFAP1"/>
<dbReference type="DMDM" id="166919564"/>
<dbReference type="jPOST" id="Q8N556"/>
<dbReference type="MassIVE" id="Q8N556"/>
<dbReference type="PeptideAtlas" id="Q8N556"/>
<dbReference type="ProteomicsDB" id="19745"/>
<dbReference type="ProteomicsDB" id="72004">
    <molecule id="Q8N556-1"/>
</dbReference>
<dbReference type="Pumba" id="Q8N556"/>
<dbReference type="Antibodypedia" id="2882">
    <property type="antibodies" value="517 antibodies from 32 providers"/>
</dbReference>
<dbReference type="DNASU" id="60312"/>
<dbReference type="Ensembl" id="ENST00000358461.6">
    <molecule id="Q8N556-1"/>
    <property type="protein sequence ID" value="ENSP00000351245.2"/>
    <property type="gene ID" value="ENSG00000196526.11"/>
</dbReference>
<dbReference type="Ensembl" id="ENST00000360265.9">
    <molecule id="Q8N556-1"/>
    <property type="protein sequence ID" value="ENSP00000353402.4"/>
    <property type="gene ID" value="ENSG00000196526.11"/>
</dbReference>
<dbReference type="Ensembl" id="ENST00000382543.4">
    <molecule id="Q8N556-2"/>
    <property type="protein sequence ID" value="ENSP00000371983.3"/>
    <property type="gene ID" value="ENSG00000196526.11"/>
</dbReference>
<dbReference type="Ensembl" id="ENST00000420658.6">
    <molecule id="Q8N556-2"/>
    <property type="protein sequence ID" value="ENSP00000410689.1"/>
    <property type="gene ID" value="ENSG00000196526.11"/>
</dbReference>
<dbReference type="GeneID" id="60312"/>
<dbReference type="KEGG" id="hsa:60312"/>
<dbReference type="MANE-Select" id="ENST00000420658.6">
    <molecule id="Q8N556-2"/>
    <property type="protein sequence ID" value="ENSP00000410689.1"/>
    <property type="RefSeq nucleotide sequence ID" value="NM_001134647.2"/>
    <property type="RefSeq protein sequence ID" value="NP_001128119.1"/>
</dbReference>
<dbReference type="UCSC" id="uc003gkg.2">
    <molecule id="Q8N556-1"/>
    <property type="organism name" value="human"/>
</dbReference>
<dbReference type="AGR" id="HGNC:24017"/>
<dbReference type="CTD" id="60312"/>
<dbReference type="DisGeNET" id="60312"/>
<dbReference type="GeneCards" id="AFAP1"/>
<dbReference type="HGNC" id="HGNC:24017">
    <property type="gene designation" value="AFAP1"/>
</dbReference>
<dbReference type="HPA" id="ENSG00000196526">
    <property type="expression patterns" value="Low tissue specificity"/>
</dbReference>
<dbReference type="MIM" id="608252">
    <property type="type" value="gene"/>
</dbReference>
<dbReference type="neXtProt" id="NX_Q8N556"/>
<dbReference type="OpenTargets" id="ENSG00000196526"/>
<dbReference type="PharmGKB" id="PA162375733"/>
<dbReference type="VEuPathDB" id="HostDB:ENSG00000196526"/>
<dbReference type="eggNOG" id="ENOG502QQI1">
    <property type="taxonomic scope" value="Eukaryota"/>
</dbReference>
<dbReference type="GeneTree" id="ENSGT00950000183067"/>
<dbReference type="HOGENOM" id="CLU_014418_2_0_1"/>
<dbReference type="InParanoid" id="Q8N556"/>
<dbReference type="OMA" id="THMASIP"/>
<dbReference type="OrthoDB" id="5970758at2759"/>
<dbReference type="PAN-GO" id="Q8N556">
    <property type="GO annotations" value="3 GO annotations based on evolutionary models"/>
</dbReference>
<dbReference type="PhylomeDB" id="Q8N556"/>
<dbReference type="PathwayCommons" id="Q8N556"/>
<dbReference type="SignaLink" id="Q8N556"/>
<dbReference type="SIGNOR" id="Q8N556"/>
<dbReference type="BioGRID-ORCS" id="60312">
    <property type="hits" value="9 hits in 1141 CRISPR screens"/>
</dbReference>
<dbReference type="ChiTaRS" id="AFAP1">
    <property type="organism name" value="human"/>
</dbReference>
<dbReference type="GeneWiki" id="AFAP1"/>
<dbReference type="GenomeRNAi" id="60312"/>
<dbReference type="Pharos" id="Q8N556">
    <property type="development level" value="Tbio"/>
</dbReference>
<dbReference type="PRO" id="PR:Q8N556"/>
<dbReference type="Proteomes" id="UP000005640">
    <property type="component" value="Chromosome 4"/>
</dbReference>
<dbReference type="RNAct" id="Q8N556">
    <property type="molecule type" value="protein"/>
</dbReference>
<dbReference type="Bgee" id="ENSG00000196526">
    <property type="expression patterns" value="Expressed in stromal cell of endometrium and 125 other cell types or tissues"/>
</dbReference>
<dbReference type="ExpressionAtlas" id="Q8N556">
    <property type="expression patterns" value="baseline and differential"/>
</dbReference>
<dbReference type="GO" id="GO:0015629">
    <property type="term" value="C:actin cytoskeleton"/>
    <property type="evidence" value="ECO:0000314"/>
    <property type="project" value="HPA"/>
</dbReference>
<dbReference type="GO" id="GO:0005884">
    <property type="term" value="C:actin filament"/>
    <property type="evidence" value="ECO:0000318"/>
    <property type="project" value="GO_Central"/>
</dbReference>
<dbReference type="GO" id="GO:0005829">
    <property type="term" value="C:cytosol"/>
    <property type="evidence" value="ECO:0000314"/>
    <property type="project" value="HPA"/>
</dbReference>
<dbReference type="GO" id="GO:0005925">
    <property type="term" value="C:focal adhesion"/>
    <property type="evidence" value="ECO:0000314"/>
    <property type="project" value="HPA"/>
</dbReference>
<dbReference type="GO" id="GO:0001725">
    <property type="term" value="C:stress fiber"/>
    <property type="evidence" value="ECO:0007669"/>
    <property type="project" value="UniProtKB-SubCell"/>
</dbReference>
<dbReference type="GO" id="GO:0003779">
    <property type="term" value="F:actin binding"/>
    <property type="evidence" value="ECO:0007669"/>
    <property type="project" value="UniProtKB-KW"/>
</dbReference>
<dbReference type="GO" id="GO:0009966">
    <property type="term" value="P:regulation of signal transduction"/>
    <property type="evidence" value="ECO:0000318"/>
    <property type="project" value="GO_Central"/>
</dbReference>
<dbReference type="CDD" id="cd13306">
    <property type="entry name" value="PH1_AFAP"/>
    <property type="match status" value="1"/>
</dbReference>
<dbReference type="CDD" id="cd13307">
    <property type="entry name" value="PH2_AFAP"/>
    <property type="match status" value="1"/>
</dbReference>
<dbReference type="FunFam" id="2.30.29.30:FF:000122">
    <property type="entry name" value="Actin filament associated protein 1"/>
    <property type="match status" value="1"/>
</dbReference>
<dbReference type="FunFam" id="2.30.29.30:FF:000020">
    <property type="entry name" value="Actin filament-associated protein 1-like 2 isoform 1"/>
    <property type="match status" value="1"/>
</dbReference>
<dbReference type="Gene3D" id="2.30.29.30">
    <property type="entry name" value="Pleckstrin-homology domain (PH domain)/Phosphotyrosine-binding domain (PTB)"/>
    <property type="match status" value="2"/>
</dbReference>
<dbReference type="InterPro" id="IPR030113">
    <property type="entry name" value="AFAP"/>
</dbReference>
<dbReference type="InterPro" id="IPR011993">
    <property type="entry name" value="PH-like_dom_sf"/>
</dbReference>
<dbReference type="InterPro" id="IPR001849">
    <property type="entry name" value="PH_domain"/>
</dbReference>
<dbReference type="PANTHER" id="PTHR14338:SF8">
    <property type="entry name" value="ACTIN FILAMENT-ASSOCIATED PROTEIN 1"/>
    <property type="match status" value="1"/>
</dbReference>
<dbReference type="PANTHER" id="PTHR14338">
    <property type="entry name" value="ACTIN FILAMENT-ASSOCIATED PROTEIN 1 FAMILY MEMBER"/>
    <property type="match status" value="1"/>
</dbReference>
<dbReference type="Pfam" id="PF00169">
    <property type="entry name" value="PH"/>
    <property type="match status" value="2"/>
</dbReference>
<dbReference type="SMART" id="SM00233">
    <property type="entry name" value="PH"/>
    <property type="match status" value="2"/>
</dbReference>
<dbReference type="SUPFAM" id="SSF50729">
    <property type="entry name" value="PH domain-like"/>
    <property type="match status" value="2"/>
</dbReference>
<dbReference type="PROSITE" id="PS50003">
    <property type="entry name" value="PH_DOMAIN"/>
    <property type="match status" value="2"/>
</dbReference>
<gene>
    <name type="primary">AFAP1</name>
    <name type="synonym">AFAP</name>
</gene>
<accession>Q8N556</accession>
<accession>A8K442</accession>
<accession>B4DMU2</accession>
<accession>E9PDT7</accession>
<accession>Q59EY5</accession>
<accession>Q9HBY1</accession>
<organism>
    <name type="scientific">Homo sapiens</name>
    <name type="common">Human</name>
    <dbReference type="NCBI Taxonomy" id="9606"/>
    <lineage>
        <taxon>Eukaryota</taxon>
        <taxon>Metazoa</taxon>
        <taxon>Chordata</taxon>
        <taxon>Craniata</taxon>
        <taxon>Vertebrata</taxon>
        <taxon>Euteleostomi</taxon>
        <taxon>Mammalia</taxon>
        <taxon>Eutheria</taxon>
        <taxon>Euarchontoglires</taxon>
        <taxon>Primates</taxon>
        <taxon>Haplorrhini</taxon>
        <taxon>Catarrhini</taxon>
        <taxon>Hominidae</taxon>
        <taxon>Homo</taxon>
    </lineage>
</organism>
<keyword id="KW-0007">Acetylation</keyword>
<keyword id="KW-0009">Actin-binding</keyword>
<keyword id="KW-0025">Alternative splicing</keyword>
<keyword id="KW-0175">Coiled coil</keyword>
<keyword id="KW-0963">Cytoplasm</keyword>
<keyword id="KW-0206">Cytoskeleton</keyword>
<keyword id="KW-0597">Phosphoprotein</keyword>
<keyword id="KW-1267">Proteomics identification</keyword>
<keyword id="KW-1185">Reference proteome</keyword>
<keyword id="KW-0677">Repeat</keyword>